<evidence type="ECO:0000250" key="1">
    <source>
        <dbReference type="UniProtKB" id="P05981"/>
    </source>
</evidence>
<evidence type="ECO:0000255" key="2"/>
<evidence type="ECO:0000255" key="3">
    <source>
        <dbReference type="PROSITE-ProRule" id="PRU00274"/>
    </source>
</evidence>
<evidence type="ECO:0000256" key="4">
    <source>
        <dbReference type="SAM" id="MobiDB-lite"/>
    </source>
</evidence>
<evidence type="ECO:0000269" key="5">
    <source>
    </source>
</evidence>
<evidence type="ECO:0000269" key="6">
    <source>
    </source>
</evidence>
<evidence type="ECO:0000269" key="7">
    <source>
    </source>
</evidence>
<evidence type="ECO:0000269" key="8">
    <source>
    </source>
</evidence>
<evidence type="ECO:0000269" key="9">
    <source>
    </source>
</evidence>
<evidence type="ECO:0000303" key="10">
    <source>
    </source>
</evidence>
<evidence type="ECO:0000303" key="11">
    <source>
    </source>
</evidence>
<evidence type="ECO:0000305" key="12"/>
<evidence type="ECO:0000305" key="13">
    <source>
    </source>
</evidence>
<evidence type="ECO:0000305" key="14">
    <source>
    </source>
</evidence>
<organism>
    <name type="scientific">Mus musculus</name>
    <name type="common">Mouse</name>
    <dbReference type="NCBI Taxonomy" id="10090"/>
    <lineage>
        <taxon>Eukaryota</taxon>
        <taxon>Metazoa</taxon>
        <taxon>Chordata</taxon>
        <taxon>Craniata</taxon>
        <taxon>Vertebrata</taxon>
        <taxon>Euteleostomi</taxon>
        <taxon>Mammalia</taxon>
        <taxon>Eutheria</taxon>
        <taxon>Euarchontoglires</taxon>
        <taxon>Glires</taxon>
        <taxon>Rodentia</taxon>
        <taxon>Myomorpha</taxon>
        <taxon>Muroidea</taxon>
        <taxon>Muridae</taxon>
        <taxon>Murinae</taxon>
        <taxon>Mus</taxon>
        <taxon>Mus</taxon>
    </lineage>
</organism>
<protein>
    <recommendedName>
        <fullName>Serine protease hepsin</fullName>
        <ecNumber evidence="13 14">3.4.21.106</ecNumber>
    </recommendedName>
    <component>
        <recommendedName>
            <fullName>Serine protease hepsin non-catalytic chain</fullName>
        </recommendedName>
    </component>
    <component>
        <recommendedName>
            <fullName>Serine protease hepsin catalytic chain</fullName>
        </recommendedName>
    </component>
</protein>
<reference key="1">
    <citation type="journal article" date="1997" name="J. Biol. Chem.">
        <title>Identification and cloning of the membrane-associated serine protease, hepsin, from mouse preimplantation embryos.</title>
        <authorList>
            <person name="Vu T.-K.H."/>
            <person name="Liu R.W."/>
            <person name="Haaksma C."/>
            <person name="Tomasek J.J."/>
            <person name="Howard E.W."/>
        </authorList>
    </citation>
    <scope>NUCLEOTIDE SEQUENCE [MRNA] (ISOFORM 2)</scope>
    <scope>ALTERNATIVE SPLICING</scope>
    <scope>SUBCELLULAR LOCATION</scope>
    <scope>ACTIVE SITE</scope>
    <scope>MUTAGENESIS OF SER-372</scope>
    <scope>CATALYTIC ACTIVITY</scope>
    <scope>TISSUE SPECIFICITY</scope>
    <source>
        <tissue>Liver</tissue>
    </source>
</reference>
<reference key="2">
    <citation type="journal article" date="1999" name="Eur. J. Biochem.">
        <title>Complete nucleotide sequence, origin of isoform and functional characterization of the mouse hepsin gene.</title>
        <authorList>
            <person name="Kawamura S."/>
            <person name="Kurachi S."/>
            <person name="Deyashiki Y."/>
            <person name="Kurachi K."/>
        </authorList>
    </citation>
    <scope>NUCLEOTIDE SEQUENCE [MRNA] (ISOFORMS 1 AND 2)</scope>
</reference>
<reference key="3">
    <citation type="journal article" date="2005" name="Science">
        <title>The transcriptional landscape of the mammalian genome.</title>
        <authorList>
            <person name="Carninci P."/>
            <person name="Kasukawa T."/>
            <person name="Katayama S."/>
            <person name="Gough J."/>
            <person name="Frith M.C."/>
            <person name="Maeda N."/>
            <person name="Oyama R."/>
            <person name="Ravasi T."/>
            <person name="Lenhard B."/>
            <person name="Wells C."/>
            <person name="Kodzius R."/>
            <person name="Shimokawa K."/>
            <person name="Bajic V.B."/>
            <person name="Brenner S.E."/>
            <person name="Batalov S."/>
            <person name="Forrest A.R."/>
            <person name="Zavolan M."/>
            <person name="Davis M.J."/>
            <person name="Wilming L.G."/>
            <person name="Aidinis V."/>
            <person name="Allen J.E."/>
            <person name="Ambesi-Impiombato A."/>
            <person name="Apweiler R."/>
            <person name="Aturaliya R.N."/>
            <person name="Bailey T.L."/>
            <person name="Bansal M."/>
            <person name="Baxter L."/>
            <person name="Beisel K.W."/>
            <person name="Bersano T."/>
            <person name="Bono H."/>
            <person name="Chalk A.M."/>
            <person name="Chiu K.P."/>
            <person name="Choudhary V."/>
            <person name="Christoffels A."/>
            <person name="Clutterbuck D.R."/>
            <person name="Crowe M.L."/>
            <person name="Dalla E."/>
            <person name="Dalrymple B.P."/>
            <person name="de Bono B."/>
            <person name="Della Gatta G."/>
            <person name="di Bernardo D."/>
            <person name="Down T."/>
            <person name="Engstrom P."/>
            <person name="Fagiolini M."/>
            <person name="Faulkner G."/>
            <person name="Fletcher C.F."/>
            <person name="Fukushima T."/>
            <person name="Furuno M."/>
            <person name="Futaki S."/>
            <person name="Gariboldi M."/>
            <person name="Georgii-Hemming P."/>
            <person name="Gingeras T.R."/>
            <person name="Gojobori T."/>
            <person name="Green R.E."/>
            <person name="Gustincich S."/>
            <person name="Harbers M."/>
            <person name="Hayashi Y."/>
            <person name="Hensch T.K."/>
            <person name="Hirokawa N."/>
            <person name="Hill D."/>
            <person name="Huminiecki L."/>
            <person name="Iacono M."/>
            <person name="Ikeo K."/>
            <person name="Iwama A."/>
            <person name="Ishikawa T."/>
            <person name="Jakt M."/>
            <person name="Kanapin A."/>
            <person name="Katoh M."/>
            <person name="Kawasawa Y."/>
            <person name="Kelso J."/>
            <person name="Kitamura H."/>
            <person name="Kitano H."/>
            <person name="Kollias G."/>
            <person name="Krishnan S.P."/>
            <person name="Kruger A."/>
            <person name="Kummerfeld S.K."/>
            <person name="Kurochkin I.V."/>
            <person name="Lareau L.F."/>
            <person name="Lazarevic D."/>
            <person name="Lipovich L."/>
            <person name="Liu J."/>
            <person name="Liuni S."/>
            <person name="McWilliam S."/>
            <person name="Madan Babu M."/>
            <person name="Madera M."/>
            <person name="Marchionni L."/>
            <person name="Matsuda H."/>
            <person name="Matsuzawa S."/>
            <person name="Miki H."/>
            <person name="Mignone F."/>
            <person name="Miyake S."/>
            <person name="Morris K."/>
            <person name="Mottagui-Tabar S."/>
            <person name="Mulder N."/>
            <person name="Nakano N."/>
            <person name="Nakauchi H."/>
            <person name="Ng P."/>
            <person name="Nilsson R."/>
            <person name="Nishiguchi S."/>
            <person name="Nishikawa S."/>
            <person name="Nori F."/>
            <person name="Ohara O."/>
            <person name="Okazaki Y."/>
            <person name="Orlando V."/>
            <person name="Pang K.C."/>
            <person name="Pavan W.J."/>
            <person name="Pavesi G."/>
            <person name="Pesole G."/>
            <person name="Petrovsky N."/>
            <person name="Piazza S."/>
            <person name="Reed J."/>
            <person name="Reid J.F."/>
            <person name="Ring B.Z."/>
            <person name="Ringwald M."/>
            <person name="Rost B."/>
            <person name="Ruan Y."/>
            <person name="Salzberg S.L."/>
            <person name="Sandelin A."/>
            <person name="Schneider C."/>
            <person name="Schoenbach C."/>
            <person name="Sekiguchi K."/>
            <person name="Semple C.A."/>
            <person name="Seno S."/>
            <person name="Sessa L."/>
            <person name="Sheng Y."/>
            <person name="Shibata Y."/>
            <person name="Shimada H."/>
            <person name="Shimada K."/>
            <person name="Silva D."/>
            <person name="Sinclair B."/>
            <person name="Sperling S."/>
            <person name="Stupka E."/>
            <person name="Sugiura K."/>
            <person name="Sultana R."/>
            <person name="Takenaka Y."/>
            <person name="Taki K."/>
            <person name="Tammoja K."/>
            <person name="Tan S.L."/>
            <person name="Tang S."/>
            <person name="Taylor M.S."/>
            <person name="Tegner J."/>
            <person name="Teichmann S.A."/>
            <person name="Ueda H.R."/>
            <person name="van Nimwegen E."/>
            <person name="Verardo R."/>
            <person name="Wei C.L."/>
            <person name="Yagi K."/>
            <person name="Yamanishi H."/>
            <person name="Zabarovsky E."/>
            <person name="Zhu S."/>
            <person name="Zimmer A."/>
            <person name="Hide W."/>
            <person name="Bult C."/>
            <person name="Grimmond S.M."/>
            <person name="Teasdale R.D."/>
            <person name="Liu E.T."/>
            <person name="Brusic V."/>
            <person name="Quackenbush J."/>
            <person name="Wahlestedt C."/>
            <person name="Mattick J.S."/>
            <person name="Hume D.A."/>
            <person name="Kai C."/>
            <person name="Sasaki D."/>
            <person name="Tomaru Y."/>
            <person name="Fukuda S."/>
            <person name="Kanamori-Katayama M."/>
            <person name="Suzuki M."/>
            <person name="Aoki J."/>
            <person name="Arakawa T."/>
            <person name="Iida J."/>
            <person name="Imamura K."/>
            <person name="Itoh M."/>
            <person name="Kato T."/>
            <person name="Kawaji H."/>
            <person name="Kawagashira N."/>
            <person name="Kawashima T."/>
            <person name="Kojima M."/>
            <person name="Kondo S."/>
            <person name="Konno H."/>
            <person name="Nakano K."/>
            <person name="Ninomiya N."/>
            <person name="Nishio T."/>
            <person name="Okada M."/>
            <person name="Plessy C."/>
            <person name="Shibata K."/>
            <person name="Shiraki T."/>
            <person name="Suzuki S."/>
            <person name="Tagami M."/>
            <person name="Waki K."/>
            <person name="Watahiki A."/>
            <person name="Okamura-Oho Y."/>
            <person name="Suzuki H."/>
            <person name="Kawai J."/>
            <person name="Hayashizaki Y."/>
        </authorList>
    </citation>
    <scope>NUCLEOTIDE SEQUENCE [LARGE SCALE MRNA] (ISOFORM 1)</scope>
    <source>
        <strain>C57BL/6J</strain>
        <tissue>Kidney</tissue>
    </source>
</reference>
<reference key="4">
    <citation type="submission" date="2005-09" db="EMBL/GenBank/DDBJ databases">
        <authorList>
            <person name="Mural R.J."/>
            <person name="Adams M.D."/>
            <person name="Myers E.W."/>
            <person name="Smith H.O."/>
            <person name="Venter J.C."/>
        </authorList>
    </citation>
    <scope>NUCLEOTIDE SEQUENCE [LARGE SCALE GENOMIC DNA]</scope>
</reference>
<reference key="5">
    <citation type="journal article" date="2004" name="Genome Res.">
        <title>The status, quality, and expansion of the NIH full-length cDNA project: the Mammalian Gene Collection (MGC).</title>
        <authorList>
            <consortium name="The MGC Project Team"/>
        </authorList>
    </citation>
    <scope>NUCLEOTIDE SEQUENCE [LARGE SCALE MRNA] (ISOFORM 1)</scope>
    <source>
        <tissue>Lung</tissue>
    </source>
</reference>
<reference key="6">
    <citation type="journal article" date="1998" name="J. Clin. Invest.">
        <title>Generation and characterization of mice deficient in hepsin, a hepatic transmembrane serine protease.</title>
        <authorList>
            <person name="Wu Q."/>
            <person name="Yu D."/>
            <person name="Post J."/>
            <person name="Halks-Miller M."/>
            <person name="Sadler J.E."/>
            <person name="Morser J."/>
        </authorList>
    </citation>
    <scope>DISRUPTION PHENOTYPE</scope>
    <scope>TISSUE SPECIFICITY</scope>
</reference>
<reference key="7">
    <citation type="journal article" date="2000" name="Thromb. Haemost.">
        <title>Mice deficient in hepsin, a serine protease, exhibit normal embryogenesis and unchanged hepatocyte regeneration ability.</title>
        <authorList>
            <person name="Yu I.S."/>
            <person name="Chen H.J."/>
            <person name="Lee Y.S."/>
            <person name="Huang P.H."/>
            <person name="Lin S.R."/>
            <person name="Tsai T.W."/>
            <person name="Lin S.W."/>
        </authorList>
    </citation>
    <scope>DISRUPTION PHENOTYPE</scope>
</reference>
<reference key="8">
    <citation type="journal article" date="2007" name="Am. J. Pathol.">
        <title>Mice deficient for the type II transmembrane serine protease, TMPRSS1/hepsin, exhibit profound hearing loss.</title>
        <authorList>
            <person name="Guipponi M."/>
            <person name="Tan J."/>
            <person name="Cannon P.Z."/>
            <person name="Donley L."/>
            <person name="Crewther P."/>
            <person name="Clarke M."/>
            <person name="Wu Q."/>
            <person name="Shepherd R.K."/>
            <person name="Scott H.S."/>
        </authorList>
    </citation>
    <scope>DISRUPTION PHENOTYPE</scope>
</reference>
<reference key="9">
    <citation type="journal article" date="2010" name="Cell">
        <title>A tissue-specific atlas of mouse protein phosphorylation and expression.</title>
        <authorList>
            <person name="Huttlin E.L."/>
            <person name="Jedrychowski M.P."/>
            <person name="Elias J.E."/>
            <person name="Goswami T."/>
            <person name="Rad R."/>
            <person name="Beausoleil S.A."/>
            <person name="Villen J."/>
            <person name="Haas W."/>
            <person name="Sowa M.E."/>
            <person name="Gygi S.P."/>
        </authorList>
    </citation>
    <scope>IDENTIFICATION BY MASS SPECTROMETRY [LARGE SCALE ANALYSIS]</scope>
    <source>
        <tissue>Kidney</tissue>
        <tissue>Liver</tissue>
    </source>
</reference>
<reference key="10">
    <citation type="journal article" date="2015" name="Elife">
        <title>The serine protease hepsin mediates urinary secretion and polymerisation of Zona Pellucida domain protein uromodulin.</title>
        <authorList>
            <person name="Brunati M."/>
            <person name="Perucca S."/>
            <person name="Han L."/>
            <person name="Cattaneo A."/>
            <person name="Consolato F."/>
            <person name="Andolfo A."/>
            <person name="Schaeffer C."/>
            <person name="Olinger E."/>
            <person name="Peng J."/>
            <person name="Santambrogio S."/>
            <person name="Perrier R."/>
            <person name="Li S."/>
            <person name="Bokhove M."/>
            <person name="Bachi A."/>
            <person name="Hummler E."/>
            <person name="Devuyst O."/>
            <person name="Wu Q."/>
            <person name="Jovine L."/>
            <person name="Rampoldi L."/>
        </authorList>
    </citation>
    <scope>FUNCTION</scope>
    <scope>CATALYTIC ACTIVITY</scope>
    <scope>DISRUPTION PHENOTYPE</scope>
    <scope>SUBCELLULAR LOCATION</scope>
    <scope>TISSUE SPECIFICITY</scope>
</reference>
<sequence length="436" mass="46821">MAKEDEEPGAHRGGSTCSRPQPGKGGRTAACCSRPKVAALIVGTLLFLTGIGAASWAIVTILLQSDQEPLYQVQLSPGDSRLAVFDKTEGTWRLLCSSRSNARVAGLGCEEMGFLRALAHSELDVRTAGANGTSGFFCVDEGGLPLAQRLLDVISVCDCPRGRFLTATCQDCGRRKLPVDRIVGGQDSSLGRWPWQVSLRYDGTHLCGGSLLSGDWVLTAAHCFPERNRVLSRWRVFAGAVARTSPHAVQLGVQAVIYHGGYLPFRDPTIDENSNDIALVHLSSSLPLTEYIQPVCLPAAGQALVDGKVCTVTGWGNTQFYGQQAMVLQEARVPIISNEVCNSPDFYGNQIKPKMFCAGYPEGGIDACQGDSGGPFVCEDSISGTSRWRLCGIVSWGTGCALARKPGVYTKVTDFREWIFKAIKTHSEASGMVTQP</sequence>
<proteinExistence type="evidence at protein level"/>
<feature type="chain" id="PRO_0000027843" description="Serine protease hepsin non-catalytic chain" evidence="2">
    <location>
        <begin position="1"/>
        <end position="181"/>
    </location>
</feature>
<feature type="chain" id="PRO_0000027844" description="Serine protease hepsin catalytic chain" evidence="2">
    <location>
        <begin position="182"/>
        <end position="436"/>
    </location>
</feature>
<feature type="topological domain" description="Cytoplasmic" evidence="2">
    <location>
        <begin position="1"/>
        <end position="38"/>
    </location>
</feature>
<feature type="transmembrane region" description="Helical; Signal-anchor for type II membrane protein" evidence="2">
    <location>
        <begin position="39"/>
        <end position="59"/>
    </location>
</feature>
<feature type="topological domain" description="Extracellular" evidence="2">
    <location>
        <begin position="60"/>
        <end position="436"/>
    </location>
</feature>
<feature type="domain" description="SRCR">
    <location>
        <begin position="73"/>
        <end position="170"/>
    </location>
</feature>
<feature type="domain" description="Peptidase S1" evidence="3">
    <location>
        <begin position="182"/>
        <end position="424"/>
    </location>
</feature>
<feature type="region of interest" description="Disordered" evidence="4">
    <location>
        <begin position="1"/>
        <end position="29"/>
    </location>
</feature>
<feature type="active site" description="Charge relay system" evidence="1">
    <location>
        <position position="222"/>
    </location>
</feature>
<feature type="active site" description="Charge relay system" evidence="1">
    <location>
        <position position="276"/>
    </location>
</feature>
<feature type="active site" description="Charge relay system" evidence="14">
    <location>
        <position position="372"/>
    </location>
</feature>
<feature type="glycosylation site" description="N-linked (GlcNAc...) asparagine" evidence="2">
    <location>
        <position position="131"/>
    </location>
</feature>
<feature type="disulfide bond" evidence="3">
    <location>
        <begin position="96"/>
        <end position="159"/>
    </location>
</feature>
<feature type="disulfide bond" evidence="3">
    <location>
        <begin position="109"/>
        <end position="169"/>
    </location>
</feature>
<feature type="disulfide bond" evidence="3">
    <location>
        <begin position="138"/>
        <end position="157"/>
    </location>
</feature>
<feature type="disulfide bond" description="Interchain (between non-catalytic and catalytic chains)" evidence="3">
    <location>
        <begin position="172"/>
        <end position="296"/>
    </location>
</feature>
<feature type="disulfide bond" evidence="3">
    <location>
        <begin position="207"/>
        <end position="223"/>
    </location>
</feature>
<feature type="disulfide bond" evidence="3">
    <location>
        <begin position="310"/>
        <end position="378"/>
    </location>
</feature>
<feature type="disulfide bond" evidence="3">
    <location>
        <begin position="341"/>
        <end position="357"/>
    </location>
</feature>
<feature type="disulfide bond" evidence="3">
    <location>
        <begin position="368"/>
        <end position="400"/>
    </location>
</feature>
<feature type="splice variant" id="VSP_007232" description="In isoform 2." evidence="10 11">
    <location>
        <begin position="25"/>
        <end position="44"/>
    </location>
</feature>
<feature type="mutagenesis site" description="Abolishes catalytic activity." evidence="8">
    <original>S</original>
    <variation>A</variation>
    <location>
        <position position="372"/>
    </location>
</feature>
<feature type="sequence conflict" description="In Ref. 1; AAB84221." evidence="12" ref="1">
    <original>F</original>
    <variation>L</variation>
    <location>
        <position position="85"/>
    </location>
</feature>
<feature type="sequence conflict" description="In Ref. 3; BAB22289." evidence="12" ref="3">
    <original>T</original>
    <variation>Y</variation>
    <location>
        <position position="204"/>
    </location>
</feature>
<feature type="sequence conflict" description="In Ref. 3; BAB22289." evidence="12" ref="3">
    <original>G</original>
    <variation>R</variation>
    <location>
        <position position="214"/>
    </location>
</feature>
<feature type="sequence conflict" description="In Ref. 3; BAB22289." evidence="12" ref="3">
    <original>NR</original>
    <variation>ET</variation>
    <location>
        <begin position="228"/>
        <end position="229"/>
    </location>
</feature>
<feature type="sequence conflict" description="In Ref. 3; BAB22289." evidence="12" ref="3">
    <original>P</original>
    <variation>L</variation>
    <location>
        <position position="264"/>
    </location>
</feature>
<feature type="sequence conflict" description="In Ref. 3; BAB22289." evidence="12" ref="3">
    <original>H</original>
    <variation>N</variation>
    <location>
        <position position="281"/>
    </location>
</feature>
<accession>O35453</accession>
<accession>B2RSC4</accession>
<accession>Q9CW97</accession>
<dbReference type="EC" id="3.4.21.106" evidence="13 14"/>
<dbReference type="EMBL" id="AF030065">
    <property type="protein sequence ID" value="AAB84221.1"/>
    <property type="molecule type" value="mRNA"/>
</dbReference>
<dbReference type="EMBL" id="AK002694">
    <property type="protein sequence ID" value="BAB22289.2"/>
    <property type="status" value="ALT_FRAME"/>
    <property type="molecule type" value="mRNA"/>
</dbReference>
<dbReference type="EMBL" id="CH466593">
    <property type="protein sequence ID" value="EDL23952.1"/>
    <property type="molecule type" value="Genomic_DNA"/>
</dbReference>
<dbReference type="EMBL" id="BC138809">
    <property type="protein sequence ID" value="AAI38810.1"/>
    <property type="molecule type" value="mRNA"/>
</dbReference>
<dbReference type="EMBL" id="BC145413">
    <property type="protein sequence ID" value="AAI45414.1"/>
    <property type="molecule type" value="mRNA"/>
</dbReference>
<dbReference type="CCDS" id="CCDS52188.1">
    <molecule id="O35453-1"/>
</dbReference>
<dbReference type="RefSeq" id="NP_001103722.1">
    <molecule id="O35453-1"/>
    <property type="nucleotide sequence ID" value="NM_001110252.2"/>
</dbReference>
<dbReference type="RefSeq" id="NP_001263198.1">
    <property type="nucleotide sequence ID" value="NM_001276269.1"/>
</dbReference>
<dbReference type="RefSeq" id="NP_032307.2">
    <property type="nucleotide sequence ID" value="NM_008281.4"/>
</dbReference>
<dbReference type="SMR" id="O35453"/>
<dbReference type="BioGRID" id="200410">
    <property type="interactions" value="3"/>
</dbReference>
<dbReference type="FunCoup" id="O35453">
    <property type="interactions" value="10"/>
</dbReference>
<dbReference type="STRING" id="10090.ENSMUSP00000038149"/>
<dbReference type="MEROPS" id="S01.224"/>
<dbReference type="GlyCosmos" id="O35453">
    <property type="glycosylation" value="1 site, No reported glycans"/>
</dbReference>
<dbReference type="GlyGen" id="O35453">
    <property type="glycosylation" value="1 site"/>
</dbReference>
<dbReference type="iPTMnet" id="O35453"/>
<dbReference type="PhosphoSitePlus" id="O35453"/>
<dbReference type="SwissPalm" id="O35453"/>
<dbReference type="jPOST" id="O35453"/>
<dbReference type="PaxDb" id="10090-ENSMUSP00000103737"/>
<dbReference type="ProteomicsDB" id="269736">
    <molecule id="O35453-1"/>
</dbReference>
<dbReference type="ProteomicsDB" id="269737">
    <molecule id="O35453-2"/>
</dbReference>
<dbReference type="Antibodypedia" id="1718">
    <property type="antibodies" value="217 antibodies from 33 providers"/>
</dbReference>
<dbReference type="DNASU" id="15451"/>
<dbReference type="Ensembl" id="ENSMUST00000108102.9">
    <molecule id="O35453-1"/>
    <property type="protein sequence ID" value="ENSMUSP00000103737.3"/>
    <property type="gene ID" value="ENSMUSG00000001249.15"/>
</dbReference>
<dbReference type="GeneID" id="15451"/>
<dbReference type="KEGG" id="mmu:15451"/>
<dbReference type="UCSC" id="uc009gid.3">
    <molecule id="O35453-1"/>
    <property type="organism name" value="mouse"/>
</dbReference>
<dbReference type="AGR" id="MGI:1196620"/>
<dbReference type="CTD" id="3249"/>
<dbReference type="MGI" id="MGI:1196620">
    <property type="gene designation" value="Hpn"/>
</dbReference>
<dbReference type="VEuPathDB" id="HostDB:ENSMUSG00000001249"/>
<dbReference type="eggNOG" id="KOG3627">
    <property type="taxonomic scope" value="Eukaryota"/>
</dbReference>
<dbReference type="GeneTree" id="ENSGT00940000159697"/>
<dbReference type="InParanoid" id="O35453"/>
<dbReference type="OrthoDB" id="5979691at2759"/>
<dbReference type="TreeFam" id="TF351678"/>
<dbReference type="BRENDA" id="3.4.21.106">
    <property type="organism ID" value="3474"/>
</dbReference>
<dbReference type="Reactome" id="R-MMU-6806942">
    <property type="pathway name" value="MET Receptor Activation"/>
</dbReference>
<dbReference type="Reactome" id="R-MMU-8852405">
    <property type="pathway name" value="Signaling by MST1"/>
</dbReference>
<dbReference type="BioGRID-ORCS" id="15451">
    <property type="hits" value="2 hits in 81 CRISPR screens"/>
</dbReference>
<dbReference type="ChiTaRS" id="Hpn">
    <property type="organism name" value="mouse"/>
</dbReference>
<dbReference type="PRO" id="PR:O35453"/>
<dbReference type="Proteomes" id="UP000000589">
    <property type="component" value="Chromosome 7"/>
</dbReference>
<dbReference type="RNAct" id="O35453">
    <property type="molecule type" value="protein"/>
</dbReference>
<dbReference type="Bgee" id="ENSMUSG00000001249">
    <property type="expression patterns" value="Expressed in right kidney and 185 other cell types or tissues"/>
</dbReference>
<dbReference type="ExpressionAtlas" id="O35453">
    <property type="expression patterns" value="baseline and differential"/>
</dbReference>
<dbReference type="GO" id="GO:0016324">
    <property type="term" value="C:apical plasma membrane"/>
    <property type="evidence" value="ECO:0007669"/>
    <property type="project" value="UniProtKB-SubCell"/>
</dbReference>
<dbReference type="GO" id="GO:0009986">
    <property type="term" value="C:cell surface"/>
    <property type="evidence" value="ECO:0000250"/>
    <property type="project" value="UniProtKB"/>
</dbReference>
<dbReference type="GO" id="GO:0005911">
    <property type="term" value="C:cell-cell junction"/>
    <property type="evidence" value="ECO:0000315"/>
    <property type="project" value="UniProtKB"/>
</dbReference>
<dbReference type="GO" id="GO:0005737">
    <property type="term" value="C:cytoplasm"/>
    <property type="evidence" value="ECO:0000250"/>
    <property type="project" value="UniProtKB"/>
</dbReference>
<dbReference type="GO" id="GO:0005789">
    <property type="term" value="C:endoplasmic reticulum membrane"/>
    <property type="evidence" value="ECO:0000250"/>
    <property type="project" value="UniProtKB"/>
</dbReference>
<dbReference type="GO" id="GO:0005576">
    <property type="term" value="C:extracellular region"/>
    <property type="evidence" value="ECO:0007669"/>
    <property type="project" value="UniProtKB-SubCell"/>
</dbReference>
<dbReference type="GO" id="GO:0043025">
    <property type="term" value="C:neuronal cell body"/>
    <property type="evidence" value="ECO:0000314"/>
    <property type="project" value="UniProtKB"/>
</dbReference>
<dbReference type="GO" id="GO:0005886">
    <property type="term" value="C:plasma membrane"/>
    <property type="evidence" value="ECO:0000314"/>
    <property type="project" value="MGI"/>
</dbReference>
<dbReference type="GO" id="GO:0004252">
    <property type="term" value="F:serine-type endopeptidase activity"/>
    <property type="evidence" value="ECO:0007669"/>
    <property type="project" value="InterPro"/>
</dbReference>
<dbReference type="GO" id="GO:0070008">
    <property type="term" value="F:serine-type exopeptidase activity"/>
    <property type="evidence" value="ECO:0007669"/>
    <property type="project" value="InterPro"/>
</dbReference>
<dbReference type="GO" id="GO:0008236">
    <property type="term" value="F:serine-type peptidase activity"/>
    <property type="evidence" value="ECO:0000250"/>
    <property type="project" value="UniProtKB"/>
</dbReference>
<dbReference type="GO" id="GO:0034769">
    <property type="term" value="P:basement membrane disassembly"/>
    <property type="evidence" value="ECO:0000250"/>
    <property type="project" value="UniProtKB"/>
</dbReference>
<dbReference type="GO" id="GO:0042632">
    <property type="term" value="P:cholesterol homeostasis"/>
    <property type="evidence" value="ECO:0000315"/>
    <property type="project" value="MGI"/>
</dbReference>
<dbReference type="GO" id="GO:0090103">
    <property type="term" value="P:cochlea morphogenesis"/>
    <property type="evidence" value="ECO:0000315"/>
    <property type="project" value="UniProtKB"/>
</dbReference>
<dbReference type="GO" id="GO:0050910">
    <property type="term" value="P:detection of mechanical stimulus involved in sensory perception of sound"/>
    <property type="evidence" value="ECO:0000315"/>
    <property type="project" value="UniProtKB"/>
</dbReference>
<dbReference type="GO" id="GO:0060429">
    <property type="term" value="P:epithelium development"/>
    <property type="evidence" value="ECO:0000270"/>
    <property type="project" value="UniProtKB"/>
</dbReference>
<dbReference type="GO" id="GO:0043066">
    <property type="term" value="P:negative regulation of apoptotic process"/>
    <property type="evidence" value="ECO:0000250"/>
    <property type="project" value="UniProtKB"/>
</dbReference>
<dbReference type="GO" id="GO:0050680">
    <property type="term" value="P:negative regulation of epithelial cell proliferation"/>
    <property type="evidence" value="ECO:0000250"/>
    <property type="project" value="UniProtKB"/>
</dbReference>
<dbReference type="GO" id="GO:0010719">
    <property type="term" value="P:negative regulation of epithelial to mesenchymal transition"/>
    <property type="evidence" value="ECO:0000250"/>
    <property type="project" value="UniProtKB"/>
</dbReference>
<dbReference type="GO" id="GO:0097195">
    <property type="term" value="P:pilomotor reflex"/>
    <property type="evidence" value="ECO:0000315"/>
    <property type="project" value="UniProtKB"/>
</dbReference>
<dbReference type="GO" id="GO:0043923">
    <property type="term" value="P:positive regulation by host of viral transcription"/>
    <property type="evidence" value="ECO:0000250"/>
    <property type="project" value="UniProtKB"/>
</dbReference>
<dbReference type="GO" id="GO:0030307">
    <property type="term" value="P:positive regulation of cell growth"/>
    <property type="evidence" value="ECO:0000250"/>
    <property type="project" value="UniProtKB"/>
</dbReference>
<dbReference type="GO" id="GO:0010628">
    <property type="term" value="P:positive regulation of gene expression"/>
    <property type="evidence" value="ECO:0000315"/>
    <property type="project" value="UniProtKB"/>
</dbReference>
<dbReference type="GO" id="GO:2000347">
    <property type="term" value="P:positive regulation of hepatocyte proliferation"/>
    <property type="evidence" value="ECO:0000250"/>
    <property type="project" value="UniProtKB"/>
</dbReference>
<dbReference type="GO" id="GO:0010756">
    <property type="term" value="P:positive regulation of plasminogen activation"/>
    <property type="evidence" value="ECO:0000250"/>
    <property type="project" value="UniProtKB"/>
</dbReference>
<dbReference type="GO" id="GO:2000611">
    <property type="term" value="P:positive regulation of thyroid hormone generation"/>
    <property type="evidence" value="ECO:0000315"/>
    <property type="project" value="UniProtKB"/>
</dbReference>
<dbReference type="GO" id="GO:0071805">
    <property type="term" value="P:potassium ion transmembrane transport"/>
    <property type="evidence" value="ECO:0000315"/>
    <property type="project" value="UniProtKB"/>
</dbReference>
<dbReference type="GO" id="GO:0006508">
    <property type="term" value="P:proteolysis"/>
    <property type="evidence" value="ECO:0000250"/>
    <property type="project" value="UniProtKB"/>
</dbReference>
<dbReference type="GO" id="GO:0008360">
    <property type="term" value="P:regulation of cell shape"/>
    <property type="evidence" value="ECO:0000250"/>
    <property type="project" value="UniProtKB"/>
</dbReference>
<dbReference type="GO" id="GO:0097066">
    <property type="term" value="P:response to thyroid hormone"/>
    <property type="evidence" value="ECO:0000315"/>
    <property type="project" value="UniProtKB"/>
</dbReference>
<dbReference type="GO" id="GO:0007605">
    <property type="term" value="P:sensory perception of sound"/>
    <property type="evidence" value="ECO:0000315"/>
    <property type="project" value="MGI"/>
</dbReference>
<dbReference type="CDD" id="cd00190">
    <property type="entry name" value="Tryp_SPc"/>
    <property type="match status" value="1"/>
</dbReference>
<dbReference type="FunFam" id="3.10.250.10:FF:000020">
    <property type="entry name" value="serine protease hepsin"/>
    <property type="match status" value="1"/>
</dbReference>
<dbReference type="FunFam" id="2.40.10.10:FF:000003">
    <property type="entry name" value="Transmembrane serine protease 3"/>
    <property type="match status" value="1"/>
</dbReference>
<dbReference type="Gene3D" id="3.10.250.10">
    <property type="entry name" value="SRCR-like domain"/>
    <property type="match status" value="1"/>
</dbReference>
<dbReference type="Gene3D" id="2.40.10.10">
    <property type="entry name" value="Trypsin-like serine proteases"/>
    <property type="match status" value="2"/>
</dbReference>
<dbReference type="InterPro" id="IPR015352">
    <property type="entry name" value="Hepsin-SRCR_dom"/>
</dbReference>
<dbReference type="InterPro" id="IPR009003">
    <property type="entry name" value="Peptidase_S1_PA"/>
</dbReference>
<dbReference type="InterPro" id="IPR043504">
    <property type="entry name" value="Peptidase_S1_PA_chymotrypsin"/>
</dbReference>
<dbReference type="InterPro" id="IPR001314">
    <property type="entry name" value="Peptidase_S1A"/>
</dbReference>
<dbReference type="InterPro" id="IPR001190">
    <property type="entry name" value="SRCR"/>
</dbReference>
<dbReference type="InterPro" id="IPR036772">
    <property type="entry name" value="SRCR-like_dom_sf"/>
</dbReference>
<dbReference type="InterPro" id="IPR001254">
    <property type="entry name" value="Trypsin_dom"/>
</dbReference>
<dbReference type="InterPro" id="IPR018114">
    <property type="entry name" value="TRYPSIN_HIS"/>
</dbReference>
<dbReference type="InterPro" id="IPR033116">
    <property type="entry name" value="TRYPSIN_SER"/>
</dbReference>
<dbReference type="PANTHER" id="PTHR24252">
    <property type="entry name" value="ACROSIN-RELATED"/>
    <property type="match status" value="1"/>
</dbReference>
<dbReference type="PANTHER" id="PTHR24252:SF7">
    <property type="entry name" value="HYALIN"/>
    <property type="match status" value="1"/>
</dbReference>
<dbReference type="Pfam" id="PF09272">
    <property type="entry name" value="Hepsin-SRCR"/>
    <property type="match status" value="1"/>
</dbReference>
<dbReference type="Pfam" id="PF00089">
    <property type="entry name" value="Trypsin"/>
    <property type="match status" value="1"/>
</dbReference>
<dbReference type="PRINTS" id="PR00722">
    <property type="entry name" value="CHYMOTRYPSIN"/>
</dbReference>
<dbReference type="SMART" id="SM00202">
    <property type="entry name" value="SR"/>
    <property type="match status" value="1"/>
</dbReference>
<dbReference type="SMART" id="SM00020">
    <property type="entry name" value="Tryp_SPc"/>
    <property type="match status" value="1"/>
</dbReference>
<dbReference type="SUPFAM" id="SSF56487">
    <property type="entry name" value="SRCR-like"/>
    <property type="match status" value="1"/>
</dbReference>
<dbReference type="SUPFAM" id="SSF50494">
    <property type="entry name" value="Trypsin-like serine proteases"/>
    <property type="match status" value="1"/>
</dbReference>
<dbReference type="PROSITE" id="PS50240">
    <property type="entry name" value="TRYPSIN_DOM"/>
    <property type="match status" value="1"/>
</dbReference>
<dbReference type="PROSITE" id="PS00134">
    <property type="entry name" value="TRYPSIN_HIS"/>
    <property type="match status" value="1"/>
</dbReference>
<dbReference type="PROSITE" id="PS00135">
    <property type="entry name" value="TRYPSIN_SER"/>
    <property type="match status" value="1"/>
</dbReference>
<comment type="function">
    <text evidence="1 7">Serine protease that cleaves extracellular substrates, and contributes to the proteolytic processing of growth factors, such as HGF and MST1/HGFL. Plays a role in cell growth and maintenance of cell morphology. Plays a role in the proteolytic processing of ACE2 (By similarity). Mediates the proteolytic cleavage of urinary UMOD that is required for UMOD polymerization (PubMed:26673890).</text>
</comment>
<comment type="catalytic activity">
    <reaction evidence="13 14">
        <text>Cleavage after basic amino-acid residues, with Arg strongly preferred to Lys.</text>
        <dbReference type="EC" id="3.4.21.106"/>
    </reaction>
</comment>
<comment type="subcellular location">
    <subcellularLocation>
        <location evidence="7">Apical cell membrane</location>
        <topology evidence="12">Single-pass type II membrane protein</topology>
    </subcellularLocation>
    <subcellularLocation>
        <location evidence="1">Cell membrane</location>
        <topology evidence="1">Single-pass type II membrane protein</topology>
    </subcellularLocation>
</comment>
<comment type="subcellular location">
    <molecule>Isoform 2</molecule>
    <subcellularLocation>
        <location evidence="8">Secreted</location>
    </subcellularLocation>
</comment>
<comment type="alternative products">
    <event type="alternative splicing"/>
    <isoform>
        <id>O35453-1</id>
        <name>1</name>
        <name>1a</name>
        <sequence type="displayed"/>
    </isoform>
    <isoform>
        <id>O35453-2</id>
        <name>2</name>
        <name>2a</name>
        <sequence type="described" ref="VSP_007232"/>
    </isoform>
</comment>
<comment type="tissue specificity">
    <text evidence="8 9">Detected in kidney, in thick ascending tubule epithelial cells (at protein level) (PubMed:26673890). Detected in kidney and liver (PubMed:9395459, PubMed:9435303).</text>
</comment>
<comment type="disruption phenotype">
    <text evidence="5 6 7 9">No visible phenotype. Mice are viable and fertile (PubMed:11127869, PubMed:9435303). They present no defect in blood coagulation (PubMed:9435303). Likewise, they present no defect in liver regeneration after liver resection (PubMed:11127869). Mice have severely impaired hearing, with abnormal morphology of the tectorial membrane in the cochlea, but no visible defects of the organ of Corti and no loss of inner or outer hair cells. Mutant mice have reduced levels of thyroid hormone. This may play a role in their hearing deficit, since adequate levels of thyroid hormone are required for normal development of the auditory system (PubMed:17620368). Urine from mutant mice lacks normally processed Umod; contrary to wild-type, urinary Umod from mutant mice does not polymerize into long fibers (PubMed:26673890).</text>
</comment>
<comment type="miscellaneous">
    <molecule>Isoform 1</molecule>
    <text>Minor isoform.</text>
</comment>
<comment type="miscellaneous">
    <molecule>Isoform 2</molecule>
    <text evidence="12">Major isoform.</text>
</comment>
<comment type="similarity">
    <text evidence="3">Belongs to the peptidase S1 family.</text>
</comment>
<comment type="sequence caution" evidence="12">
    <conflict type="frameshift">
        <sequence resource="EMBL-CDS" id="BAB22289"/>
    </conflict>
</comment>
<name>HEPS_MOUSE</name>
<gene>
    <name type="primary">Hpn</name>
</gene>
<keyword id="KW-0025">Alternative splicing</keyword>
<keyword id="KW-1003">Cell membrane</keyword>
<keyword id="KW-1015">Disulfide bond</keyword>
<keyword id="KW-0325">Glycoprotein</keyword>
<keyword id="KW-0378">Hydrolase</keyword>
<keyword id="KW-0472">Membrane</keyword>
<keyword id="KW-0645">Protease</keyword>
<keyword id="KW-1185">Reference proteome</keyword>
<keyword id="KW-0964">Secreted</keyword>
<keyword id="KW-0720">Serine protease</keyword>
<keyword id="KW-0735">Signal-anchor</keyword>
<keyword id="KW-0812">Transmembrane</keyword>
<keyword id="KW-1133">Transmembrane helix</keyword>